<gene>
    <name evidence="1" type="primary">clpS</name>
    <name type="ordered locus">SeAg_B0946</name>
</gene>
<dbReference type="EMBL" id="CP001138">
    <property type="protein sequence ID" value="ACH48694.1"/>
    <property type="molecule type" value="Genomic_DNA"/>
</dbReference>
<dbReference type="RefSeq" id="WP_000520789.1">
    <property type="nucleotide sequence ID" value="NC_011149.1"/>
</dbReference>
<dbReference type="SMR" id="B5F127"/>
<dbReference type="KEGG" id="sea:SeAg_B0946"/>
<dbReference type="HOGENOM" id="CLU_134358_2_1_6"/>
<dbReference type="Proteomes" id="UP000008819">
    <property type="component" value="Chromosome"/>
</dbReference>
<dbReference type="GO" id="GO:0030163">
    <property type="term" value="P:protein catabolic process"/>
    <property type="evidence" value="ECO:0007669"/>
    <property type="project" value="InterPro"/>
</dbReference>
<dbReference type="GO" id="GO:0006508">
    <property type="term" value="P:proteolysis"/>
    <property type="evidence" value="ECO:0007669"/>
    <property type="project" value="UniProtKB-UniRule"/>
</dbReference>
<dbReference type="FunFam" id="3.30.1390.10:FF:000002">
    <property type="entry name" value="ATP-dependent Clp protease adapter protein ClpS"/>
    <property type="match status" value="1"/>
</dbReference>
<dbReference type="Gene3D" id="3.30.1390.10">
    <property type="match status" value="1"/>
</dbReference>
<dbReference type="HAMAP" id="MF_00302">
    <property type="entry name" value="ClpS"/>
    <property type="match status" value="1"/>
</dbReference>
<dbReference type="InterPro" id="IPR022935">
    <property type="entry name" value="ClpS"/>
</dbReference>
<dbReference type="InterPro" id="IPR003769">
    <property type="entry name" value="ClpS_core"/>
</dbReference>
<dbReference type="InterPro" id="IPR014719">
    <property type="entry name" value="Ribosomal_bL12_C/ClpS-like"/>
</dbReference>
<dbReference type="NCBIfam" id="NF000670">
    <property type="entry name" value="PRK00033.1-3"/>
    <property type="match status" value="1"/>
</dbReference>
<dbReference type="NCBIfam" id="NF000672">
    <property type="entry name" value="PRK00033.1-5"/>
    <property type="match status" value="1"/>
</dbReference>
<dbReference type="PANTHER" id="PTHR33473:SF19">
    <property type="entry name" value="ATP-DEPENDENT CLP PROTEASE ADAPTER PROTEIN CLPS"/>
    <property type="match status" value="1"/>
</dbReference>
<dbReference type="PANTHER" id="PTHR33473">
    <property type="entry name" value="ATP-DEPENDENT CLP PROTEASE ADAPTER PROTEIN CLPS1, CHLOROPLASTIC"/>
    <property type="match status" value="1"/>
</dbReference>
<dbReference type="Pfam" id="PF02617">
    <property type="entry name" value="ClpS"/>
    <property type="match status" value="1"/>
</dbReference>
<dbReference type="SUPFAM" id="SSF54736">
    <property type="entry name" value="ClpS-like"/>
    <property type="match status" value="1"/>
</dbReference>
<name>CLPS_SALA4</name>
<protein>
    <recommendedName>
        <fullName evidence="1">ATP-dependent Clp protease adapter protein ClpS</fullName>
    </recommendedName>
</protein>
<accession>B5F127</accession>
<comment type="function">
    <text evidence="1">Involved in the modulation of the specificity of the ClpAP-mediated ATP-dependent protein degradation.</text>
</comment>
<comment type="subunit">
    <text evidence="1">Binds to the N-terminal domain of the chaperone ClpA.</text>
</comment>
<comment type="similarity">
    <text evidence="1">Belongs to the ClpS family.</text>
</comment>
<feature type="chain" id="PRO_1000115469" description="ATP-dependent Clp protease adapter protein ClpS">
    <location>
        <begin position="1"/>
        <end position="106"/>
    </location>
</feature>
<sequence>MGKTNDWLDFDQLVEDSVRDALKPPSMYKVILVNDDYTPMEFVIDVLQKFFSYDVERATQLMLAVHYQGKAICGVFTAEVAETKVAMVNKYARENEHPLLCTLEKA</sequence>
<evidence type="ECO:0000255" key="1">
    <source>
        <dbReference type="HAMAP-Rule" id="MF_00302"/>
    </source>
</evidence>
<proteinExistence type="inferred from homology"/>
<reference key="1">
    <citation type="journal article" date="2011" name="J. Bacteriol.">
        <title>Comparative genomics of 28 Salmonella enterica isolates: evidence for CRISPR-mediated adaptive sublineage evolution.</title>
        <authorList>
            <person name="Fricke W.F."/>
            <person name="Mammel M.K."/>
            <person name="McDermott P.F."/>
            <person name="Tartera C."/>
            <person name="White D.G."/>
            <person name="Leclerc J.E."/>
            <person name="Ravel J."/>
            <person name="Cebula T.A."/>
        </authorList>
    </citation>
    <scope>NUCLEOTIDE SEQUENCE [LARGE SCALE GENOMIC DNA]</scope>
    <source>
        <strain>SL483</strain>
    </source>
</reference>
<organism>
    <name type="scientific">Salmonella agona (strain SL483)</name>
    <dbReference type="NCBI Taxonomy" id="454166"/>
    <lineage>
        <taxon>Bacteria</taxon>
        <taxon>Pseudomonadati</taxon>
        <taxon>Pseudomonadota</taxon>
        <taxon>Gammaproteobacteria</taxon>
        <taxon>Enterobacterales</taxon>
        <taxon>Enterobacteriaceae</taxon>
        <taxon>Salmonella</taxon>
    </lineage>
</organism>